<comment type="catalytic activity">
    <reaction>
        <text>1-(2-carboxyphenylamino)-1-deoxy-D-ribulose 5-phosphate + H(+) = (1S,2R)-1-C-(indol-3-yl)glycerol 3-phosphate + CO2 + H2O</text>
        <dbReference type="Rhea" id="RHEA:23476"/>
        <dbReference type="ChEBI" id="CHEBI:15377"/>
        <dbReference type="ChEBI" id="CHEBI:15378"/>
        <dbReference type="ChEBI" id="CHEBI:16526"/>
        <dbReference type="ChEBI" id="CHEBI:58613"/>
        <dbReference type="ChEBI" id="CHEBI:58866"/>
        <dbReference type="EC" id="4.1.1.48"/>
    </reaction>
</comment>
<comment type="pathway">
    <text>Amino-acid biosynthesis; L-tryptophan biosynthesis; L-tryptophan from chorismate: step 4/5.</text>
</comment>
<comment type="similarity">
    <text evidence="1">Belongs to the TrpC family.</text>
</comment>
<evidence type="ECO:0000305" key="1"/>
<keyword id="KW-0028">Amino-acid biosynthesis</keyword>
<keyword id="KW-0057">Aromatic amino acid biosynthesis</keyword>
<keyword id="KW-0210">Decarboxylase</keyword>
<keyword id="KW-0456">Lyase</keyword>
<keyword id="KW-1185">Reference proteome</keyword>
<keyword id="KW-0822">Tryptophan biosynthesis</keyword>
<proteinExistence type="inferred from homology"/>
<gene>
    <name type="primary">trpC</name>
    <name type="ordered locus">ML1271</name>
    <name type="ORF">MLCB1610.33</name>
</gene>
<organism>
    <name type="scientific">Mycobacterium leprae (strain TN)</name>
    <dbReference type="NCBI Taxonomy" id="272631"/>
    <lineage>
        <taxon>Bacteria</taxon>
        <taxon>Bacillati</taxon>
        <taxon>Actinomycetota</taxon>
        <taxon>Actinomycetes</taxon>
        <taxon>Mycobacteriales</taxon>
        <taxon>Mycobacteriaceae</taxon>
        <taxon>Mycobacterium</taxon>
    </lineage>
</organism>
<name>TRPC_MYCLE</name>
<feature type="chain" id="PRO_0000154233" description="Indole-3-glycerol phosphate synthase">
    <location>
        <begin position="1"/>
        <end position="272"/>
    </location>
</feature>
<sequence>MCPATVLDSILKGVRADVAAREACISLSEIKAAAAAAPAPLDAMAALREPGIGVIAEVKRASPSVGSLATIADPAKLAQAYEDGGARIISVLTEERRFNGSLDDLDAVRAAVSVPVLRKDFVVQPYQIHEARAHGADMLLLIVAALDQSALMSMLDRTESLGMIALVEVRTEQEADRALKAGAKVIGVNARDLMTLEVDRDCFSRIAPGLPSNVIRIAESGVRGPADLLAYAGAGADAVLVGEGLVKSGDPRAAVADLVTAGTHPSCPKPAR</sequence>
<accession>Q9X7C7</accession>
<reference key="1">
    <citation type="journal article" date="2001" name="Nature">
        <title>Massive gene decay in the leprosy bacillus.</title>
        <authorList>
            <person name="Cole S.T."/>
            <person name="Eiglmeier K."/>
            <person name="Parkhill J."/>
            <person name="James K.D."/>
            <person name="Thomson N.R."/>
            <person name="Wheeler P.R."/>
            <person name="Honore N."/>
            <person name="Garnier T."/>
            <person name="Churcher C.M."/>
            <person name="Harris D.E."/>
            <person name="Mungall K.L."/>
            <person name="Basham D."/>
            <person name="Brown D."/>
            <person name="Chillingworth T."/>
            <person name="Connor R."/>
            <person name="Davies R.M."/>
            <person name="Devlin K."/>
            <person name="Duthoy S."/>
            <person name="Feltwell T."/>
            <person name="Fraser A."/>
            <person name="Hamlin N."/>
            <person name="Holroyd S."/>
            <person name="Hornsby T."/>
            <person name="Jagels K."/>
            <person name="Lacroix C."/>
            <person name="Maclean J."/>
            <person name="Moule S."/>
            <person name="Murphy L.D."/>
            <person name="Oliver K."/>
            <person name="Quail M.A."/>
            <person name="Rajandream M.A."/>
            <person name="Rutherford K.M."/>
            <person name="Rutter S."/>
            <person name="Seeger K."/>
            <person name="Simon S."/>
            <person name="Simmonds M."/>
            <person name="Skelton J."/>
            <person name="Squares R."/>
            <person name="Squares S."/>
            <person name="Stevens K."/>
            <person name="Taylor K."/>
            <person name="Whitehead S."/>
            <person name="Woodward J.R."/>
            <person name="Barrell B.G."/>
        </authorList>
    </citation>
    <scope>NUCLEOTIDE SEQUENCE [LARGE SCALE GENOMIC DNA]</scope>
    <source>
        <strain>TN</strain>
    </source>
</reference>
<protein>
    <recommendedName>
        <fullName>Indole-3-glycerol phosphate synthase</fullName>
        <shortName>IGPS</shortName>
        <ecNumber>4.1.1.48</ecNumber>
    </recommendedName>
</protein>
<dbReference type="EC" id="4.1.1.48"/>
<dbReference type="EMBL" id="AL049913">
    <property type="protein sequence ID" value="CAB43179.1"/>
    <property type="molecule type" value="Genomic_DNA"/>
</dbReference>
<dbReference type="EMBL" id="AL583921">
    <property type="protein sequence ID" value="CAC31652.1"/>
    <property type="molecule type" value="Genomic_DNA"/>
</dbReference>
<dbReference type="PIR" id="T45256">
    <property type="entry name" value="T45256"/>
</dbReference>
<dbReference type="RefSeq" id="NP_301916.1">
    <property type="nucleotide sequence ID" value="NC_002677.1"/>
</dbReference>
<dbReference type="RefSeq" id="WP_010908237.1">
    <property type="nucleotide sequence ID" value="NC_002677.1"/>
</dbReference>
<dbReference type="SMR" id="Q9X7C7"/>
<dbReference type="STRING" id="272631.gene:17575103"/>
<dbReference type="KEGG" id="mle:ML1271"/>
<dbReference type="PATRIC" id="fig|272631.5.peg.2335"/>
<dbReference type="Leproma" id="ML1271"/>
<dbReference type="eggNOG" id="COG0134">
    <property type="taxonomic scope" value="Bacteria"/>
</dbReference>
<dbReference type="HOGENOM" id="CLU_034247_0_0_11"/>
<dbReference type="OrthoDB" id="9804217at2"/>
<dbReference type="UniPathway" id="UPA00035">
    <property type="reaction ID" value="UER00043"/>
</dbReference>
<dbReference type="Proteomes" id="UP000000806">
    <property type="component" value="Chromosome"/>
</dbReference>
<dbReference type="GO" id="GO:0004425">
    <property type="term" value="F:indole-3-glycerol-phosphate synthase activity"/>
    <property type="evidence" value="ECO:0007669"/>
    <property type="project" value="UniProtKB-UniRule"/>
</dbReference>
<dbReference type="GO" id="GO:0004640">
    <property type="term" value="F:phosphoribosylanthranilate isomerase activity"/>
    <property type="evidence" value="ECO:0007669"/>
    <property type="project" value="TreeGrafter"/>
</dbReference>
<dbReference type="GO" id="GO:0000162">
    <property type="term" value="P:L-tryptophan biosynthetic process"/>
    <property type="evidence" value="ECO:0007669"/>
    <property type="project" value="UniProtKB-UniRule"/>
</dbReference>
<dbReference type="CDD" id="cd00331">
    <property type="entry name" value="IGPS"/>
    <property type="match status" value="1"/>
</dbReference>
<dbReference type="FunFam" id="3.20.20.70:FF:000024">
    <property type="entry name" value="Indole-3-glycerol phosphate synthase"/>
    <property type="match status" value="1"/>
</dbReference>
<dbReference type="Gene3D" id="3.20.20.70">
    <property type="entry name" value="Aldolase class I"/>
    <property type="match status" value="1"/>
</dbReference>
<dbReference type="HAMAP" id="MF_00134_B">
    <property type="entry name" value="IGPS_B"/>
    <property type="match status" value="1"/>
</dbReference>
<dbReference type="InterPro" id="IPR013785">
    <property type="entry name" value="Aldolase_TIM"/>
</dbReference>
<dbReference type="InterPro" id="IPR045186">
    <property type="entry name" value="Indole-3-glycerol_P_synth"/>
</dbReference>
<dbReference type="InterPro" id="IPR013798">
    <property type="entry name" value="Indole-3-glycerol_P_synth_dom"/>
</dbReference>
<dbReference type="InterPro" id="IPR001468">
    <property type="entry name" value="Indole-3-GlycerolPSynthase_CS"/>
</dbReference>
<dbReference type="InterPro" id="IPR011060">
    <property type="entry name" value="RibuloseP-bd_barrel"/>
</dbReference>
<dbReference type="NCBIfam" id="NF001369">
    <property type="entry name" value="PRK00278.1-1"/>
    <property type="match status" value="1"/>
</dbReference>
<dbReference type="NCBIfam" id="NF001377">
    <property type="entry name" value="PRK00278.2-4"/>
    <property type="match status" value="1"/>
</dbReference>
<dbReference type="PANTHER" id="PTHR22854:SF2">
    <property type="entry name" value="INDOLE-3-GLYCEROL-PHOSPHATE SYNTHASE"/>
    <property type="match status" value="1"/>
</dbReference>
<dbReference type="PANTHER" id="PTHR22854">
    <property type="entry name" value="TRYPTOPHAN BIOSYNTHESIS PROTEIN"/>
    <property type="match status" value="1"/>
</dbReference>
<dbReference type="Pfam" id="PF00218">
    <property type="entry name" value="IGPS"/>
    <property type="match status" value="1"/>
</dbReference>
<dbReference type="SUPFAM" id="SSF51366">
    <property type="entry name" value="Ribulose-phoshate binding barrel"/>
    <property type="match status" value="1"/>
</dbReference>
<dbReference type="PROSITE" id="PS00614">
    <property type="entry name" value="IGPS"/>
    <property type="match status" value="1"/>
</dbReference>